<gene>
    <name evidence="1 7 8" type="primary">kaiC1</name>
    <name type="ordered locus">slr0758</name>
</gene>
<reference key="1">
    <citation type="journal article" date="1996" name="DNA Res.">
        <title>Sequence analysis of the genome of the unicellular cyanobacterium Synechocystis sp. strain PCC6803. II. Sequence determination of the entire genome and assignment of potential protein-coding regions.</title>
        <authorList>
            <person name="Kaneko T."/>
            <person name="Sato S."/>
            <person name="Kotani H."/>
            <person name="Tanaka A."/>
            <person name="Asamizu E."/>
            <person name="Nakamura Y."/>
            <person name="Miyajima N."/>
            <person name="Hirosawa M."/>
            <person name="Sugiura M."/>
            <person name="Sasamoto S."/>
            <person name="Kimura T."/>
            <person name="Hosouchi T."/>
            <person name="Matsuno A."/>
            <person name="Muraki A."/>
            <person name="Nakazaki N."/>
            <person name="Naruo K."/>
            <person name="Okumura S."/>
            <person name="Shimpo S."/>
            <person name="Takeuchi C."/>
            <person name="Wada T."/>
            <person name="Watanabe A."/>
            <person name="Yamada M."/>
            <person name="Yasuda M."/>
            <person name="Tabata S."/>
        </authorList>
    </citation>
    <scope>NUCLEOTIDE SEQUENCE [LARGE SCALE GENOMIC DNA]</scope>
    <source>
        <strain>ATCC 27184 / PCC 6803 / Kazusa</strain>
    </source>
</reference>
<reference key="2">
    <citation type="journal article" date="2013" name="Microbiology">
        <title>Biochemical analysis of three putative KaiC clock proteins from Synechocystis sp. PCC 6803 suggests their functional divergence.</title>
        <authorList>
            <person name="Wiegard A."/>
            <person name="Doerrich A.K."/>
            <person name="Deinzer H.T."/>
            <person name="Beck C."/>
            <person name="Wilde A."/>
            <person name="Holtzendorff J."/>
            <person name="Axmann I.M."/>
        </authorList>
    </citation>
    <scope>PROBABLE CATALYTIC ACTIVITY</scope>
    <scope>AUTOPHOSPHORYLATION ACTIVITY</scope>
    <scope>INTERACTION WITH KAIA</scope>
    <scope>SUBUNIT</scope>
    <scope>PROBABLE PHOSPHORYLATION AT SER-432 AND THR-433</scope>
    <source>
        <strain>ATCC 27184 / PCC 6803 / Kazusa</strain>
    </source>
</reference>
<reference key="3">
    <citation type="journal article" date="2014" name="Microbiology">
        <title>Deletion of the Synechocystis sp. PCC 6803 kaiAB1C1 gene cluster causes impaired cell growth under light-dark conditions.</title>
        <authorList>
            <person name="Doerrich A.K."/>
            <person name="Mitschke J."/>
            <person name="Siadat O."/>
            <person name="Wilde A."/>
        </authorList>
    </citation>
    <scope>FUNCTION</scope>
    <scope>DISRUPTION PHENOTYPE</scope>
    <source>
        <strain>ATCC 27184 / PCC 6803 / Kazusa</strain>
    </source>
</reference>
<reference key="4">
    <citation type="journal article" date="2015" name="Environ. Microbiol.">
        <title>Alteration of cyanobacterial sugar and amino acid metabolism by overexpression hik8, encoding a KaiC-associated histidine kinase.</title>
        <authorList>
            <person name="Osanai T."/>
            <person name="Shirai T."/>
            <person name="Iijima H."/>
            <person name="Kuwahara A."/>
            <person name="Suzuki I."/>
            <person name="Kondo A."/>
            <person name="Hirai M.Y."/>
        </authorList>
    </citation>
    <scope>INTERACTION WITH SASA</scope>
    <source>
        <strain>ATCC 27184 / PCC 6803 / Kazusa</strain>
    </source>
</reference>
<reference key="5">
    <citation type="journal article" date="2018" name="Mol. Microbiol.">
        <title>The role of the Synechocystis sp. PCC 6803 homolog of the circadian clock output regulator RpaA in day-night transitions.</title>
        <authorList>
            <person name="Koebler C."/>
            <person name="Schultz S.J."/>
            <person name="Kopp D."/>
            <person name="Voigt K."/>
            <person name="Wilde A."/>
        </authorList>
    </citation>
    <scope>INTERACTION WITH SASA</scope>
    <source>
        <strain>ATCC 27184 / PCC 6803 / Kazusa</strain>
    </source>
</reference>
<reference key="6">
    <citation type="journal article" date="2020" name="J. Bacteriol.">
        <title>Synechocystis KaiC3 Displays Temperature- and KaiB-Dependent ATPase Activity and Is Important for Growth in Darkness.</title>
        <authorList>
            <person name="Wiegard A."/>
            <person name="Koebler C."/>
            <person name="Oyama K."/>
            <person name="Doerrich A.K."/>
            <person name="Azai C."/>
            <person name="Terauchi K."/>
            <person name="Wilde A."/>
            <person name="Axmann I.M."/>
        </authorList>
    </citation>
    <scope>INTERACTION WITH ITSELF; KAIB1; KAIB3 AND KAIC3</scope>
    <source>
        <strain>ATCC 27184 / PCC 6803 / Kazusa</strain>
    </source>
</reference>
<dbReference type="EC" id="2.7.11.1" evidence="1 9"/>
<dbReference type="EC" id="3.6.4.-" evidence="1"/>
<dbReference type="EMBL" id="BA000022">
    <property type="protein sequence ID" value="BAA18762.1"/>
    <property type="molecule type" value="Genomic_DNA"/>
</dbReference>
<dbReference type="PIR" id="S76850">
    <property type="entry name" value="S76850"/>
</dbReference>
<dbReference type="SMR" id="P74646"/>
<dbReference type="IntAct" id="P74646">
    <property type="interactions" value="2"/>
</dbReference>
<dbReference type="STRING" id="1148.gene:10500534"/>
<dbReference type="iPTMnet" id="P74646"/>
<dbReference type="PaxDb" id="1148-1653852"/>
<dbReference type="EnsemblBacteria" id="BAA18762">
    <property type="protein sequence ID" value="BAA18762"/>
    <property type="gene ID" value="BAA18762"/>
</dbReference>
<dbReference type="KEGG" id="syn:slr0758"/>
<dbReference type="eggNOG" id="COG0467">
    <property type="taxonomic scope" value="Bacteria"/>
</dbReference>
<dbReference type="InParanoid" id="P74646"/>
<dbReference type="PhylomeDB" id="P74646"/>
<dbReference type="Proteomes" id="UP000001425">
    <property type="component" value="Chromosome"/>
</dbReference>
<dbReference type="GO" id="GO:0005524">
    <property type="term" value="F:ATP binding"/>
    <property type="evidence" value="ECO:0007669"/>
    <property type="project" value="UniProtKB-UniRule"/>
</dbReference>
<dbReference type="GO" id="GO:0016887">
    <property type="term" value="F:ATP hydrolysis activity"/>
    <property type="evidence" value="ECO:0007669"/>
    <property type="project" value="RHEA"/>
</dbReference>
<dbReference type="GO" id="GO:0003677">
    <property type="term" value="F:DNA binding"/>
    <property type="evidence" value="ECO:0007669"/>
    <property type="project" value="InterPro"/>
</dbReference>
<dbReference type="GO" id="GO:0016301">
    <property type="term" value="F:kinase activity"/>
    <property type="evidence" value="ECO:0000250"/>
    <property type="project" value="UniProtKB"/>
</dbReference>
<dbReference type="GO" id="GO:0000287">
    <property type="term" value="F:magnesium ion binding"/>
    <property type="evidence" value="ECO:0007669"/>
    <property type="project" value="UniProtKB-UniRule"/>
</dbReference>
<dbReference type="GO" id="GO:0106310">
    <property type="term" value="F:protein serine kinase activity"/>
    <property type="evidence" value="ECO:0007669"/>
    <property type="project" value="RHEA"/>
</dbReference>
<dbReference type="GO" id="GO:0004674">
    <property type="term" value="F:protein serine/threonine kinase activity"/>
    <property type="evidence" value="ECO:0007669"/>
    <property type="project" value="UniProtKB-KW"/>
</dbReference>
<dbReference type="GO" id="GO:0004712">
    <property type="term" value="F:protein serine/threonine/tyrosine kinase activity"/>
    <property type="evidence" value="ECO:0007669"/>
    <property type="project" value="UniProtKB-UniRule"/>
</dbReference>
<dbReference type="GO" id="GO:0007623">
    <property type="term" value="P:circadian rhythm"/>
    <property type="evidence" value="ECO:0000315"/>
    <property type="project" value="UniProtKB"/>
</dbReference>
<dbReference type="GO" id="GO:0046777">
    <property type="term" value="P:protein autophosphorylation"/>
    <property type="evidence" value="ECO:0000250"/>
    <property type="project" value="UniProtKB"/>
</dbReference>
<dbReference type="GO" id="GO:0042752">
    <property type="term" value="P:regulation of circadian rhythm"/>
    <property type="evidence" value="ECO:0007669"/>
    <property type="project" value="InterPro"/>
</dbReference>
<dbReference type="GO" id="GO:0006355">
    <property type="term" value="P:regulation of DNA-templated transcription"/>
    <property type="evidence" value="ECO:0007669"/>
    <property type="project" value="InterPro"/>
</dbReference>
<dbReference type="CDD" id="cd19485">
    <property type="entry name" value="KaiC-N"/>
    <property type="match status" value="1"/>
</dbReference>
<dbReference type="CDD" id="cd19484">
    <property type="entry name" value="KaiC_C"/>
    <property type="match status" value="1"/>
</dbReference>
<dbReference type="FunFam" id="3.40.50.300:FF:001364">
    <property type="entry name" value="Circadian clock protein kinase KaiC"/>
    <property type="match status" value="1"/>
</dbReference>
<dbReference type="Gene3D" id="3.40.50.300">
    <property type="entry name" value="P-loop containing nucleotide triphosphate hydrolases"/>
    <property type="match status" value="2"/>
</dbReference>
<dbReference type="HAMAP" id="MF_01836">
    <property type="entry name" value="KaiC"/>
    <property type="match status" value="1"/>
</dbReference>
<dbReference type="InterPro" id="IPR051347">
    <property type="entry name" value="Circadian_clock_KaiC-rel"/>
</dbReference>
<dbReference type="InterPro" id="IPR013503">
    <property type="entry name" value="Circadian_KaiC_bact"/>
</dbReference>
<dbReference type="InterPro" id="IPR030665">
    <property type="entry name" value="KaiC"/>
</dbReference>
<dbReference type="InterPro" id="IPR014774">
    <property type="entry name" value="KaiC-like_dom"/>
</dbReference>
<dbReference type="InterPro" id="IPR047222">
    <property type="entry name" value="KaiC_C"/>
</dbReference>
<dbReference type="InterPro" id="IPR010624">
    <property type="entry name" value="KaiC_dom"/>
</dbReference>
<dbReference type="InterPro" id="IPR047221">
    <property type="entry name" value="KaiC_N"/>
</dbReference>
<dbReference type="InterPro" id="IPR027417">
    <property type="entry name" value="P-loop_NTPase"/>
</dbReference>
<dbReference type="NCBIfam" id="TIGR02655">
    <property type="entry name" value="circ_KaiC"/>
    <property type="match status" value="1"/>
</dbReference>
<dbReference type="NCBIfam" id="NF006799">
    <property type="entry name" value="PRK09302.1"/>
    <property type="match status" value="1"/>
</dbReference>
<dbReference type="PANTHER" id="PTHR42926">
    <property type="match status" value="1"/>
</dbReference>
<dbReference type="PANTHER" id="PTHR42926:SF1">
    <property type="entry name" value="CIRCADIAN CLOCK OSCILLATOR PROTEIN KAIC 1"/>
    <property type="match status" value="1"/>
</dbReference>
<dbReference type="Pfam" id="PF06745">
    <property type="entry name" value="ATPase"/>
    <property type="match status" value="2"/>
</dbReference>
<dbReference type="PIRSF" id="PIRSF039117">
    <property type="entry name" value="KaiC"/>
    <property type="match status" value="1"/>
</dbReference>
<dbReference type="SUPFAM" id="SSF52540">
    <property type="entry name" value="P-loop containing nucleoside triphosphate hydrolases"/>
    <property type="match status" value="2"/>
</dbReference>
<dbReference type="PROSITE" id="PS51146">
    <property type="entry name" value="KAIC"/>
    <property type="match status" value="2"/>
</dbReference>
<sequence>MNLPIVNERNRPDVPRKGVQKIRTVIEGFDEITHGGLPIGRTTLVSGTSGTGKTLLAVQFLYQGIHHFDYPGLFITFEESPSDIIENAYSFGWDLQQLIDDGKLFILDASPDPEGQEVVGTFDLSALIERIQYAVRKYKAKLVSIDSVTAVFQQYDAASVVRREIFRLVARLKQLQVTSIMTTERVEEYGPIARFGVEEFVSDNVVVLRNVLEGERRRRTVEILKLRGTTHMKGEYPFTITHDGINIFPLGAMRLTQRSSNARISSGVQTLDEMCGGGFFKDSIILATGATGTGKTLLVSKFLQEGCRQRERAILFAYEESRAQLSRNASSWGIDFEEMEHKGLLKLLCTYPESAGLEDHLQMIKSEISEFKPSRIAIDSLSALARGVTNNAFRQFVIGVTGYAKQEEITGFFTNTTDQFMGAHSITESHISTITDTILMLQYVEIRGEMSRALNVFKMRGSWHDKGIREYSISHDGPDIRDSFRNYERIISGSPTRISVDEKSELSRIVRGVKDKTAE</sequence>
<evidence type="ECO:0000255" key="1">
    <source>
        <dbReference type="HAMAP-Rule" id="MF_01836"/>
    </source>
</evidence>
<evidence type="ECO:0000269" key="2">
    <source>
    </source>
</evidence>
<evidence type="ECO:0000269" key="3">
    <source>
    </source>
</evidence>
<evidence type="ECO:0000269" key="4">
    <source>
    </source>
</evidence>
<evidence type="ECO:0000269" key="5">
    <source>
    </source>
</evidence>
<evidence type="ECO:0000269" key="6">
    <source>
    </source>
</evidence>
<evidence type="ECO:0000303" key="7">
    <source>
    </source>
</evidence>
<evidence type="ECO:0000303" key="8">
    <source>
    </source>
</evidence>
<evidence type="ECO:0000305" key="9">
    <source>
    </source>
</evidence>
<evidence type="ECO:0000305" key="10">
    <source>
    </source>
</evidence>
<name>KAIC1_SYNY3</name>
<accession>P74646</accession>
<keyword id="KW-0067">ATP-binding</keyword>
<keyword id="KW-0090">Biological rhythms</keyword>
<keyword id="KW-0378">Hydrolase</keyword>
<keyword id="KW-0418">Kinase</keyword>
<keyword id="KW-0460">Magnesium</keyword>
<keyword id="KW-0479">Metal-binding</keyword>
<keyword id="KW-0547">Nucleotide-binding</keyword>
<keyword id="KW-0597">Phosphoprotein</keyword>
<keyword id="KW-1185">Reference proteome</keyword>
<keyword id="KW-0677">Repeat</keyword>
<keyword id="KW-0723">Serine/threonine-protein kinase</keyword>
<keyword id="KW-0804">Transcription</keyword>
<keyword id="KW-0805">Transcription regulation</keyword>
<keyword id="KW-0808">Transferase</keyword>
<organism>
    <name type="scientific">Synechocystis sp. (strain ATCC 27184 / PCC 6803 / Kazusa)</name>
    <dbReference type="NCBI Taxonomy" id="1111708"/>
    <lineage>
        <taxon>Bacteria</taxon>
        <taxon>Bacillati</taxon>
        <taxon>Cyanobacteriota</taxon>
        <taxon>Cyanophyceae</taxon>
        <taxon>Synechococcales</taxon>
        <taxon>Merismopediaceae</taxon>
        <taxon>Synechocystis</taxon>
    </lineage>
</organism>
<feature type="chain" id="PRO_0000217786" description="Circadian clock oscillator protein KaiC 1">
    <location>
        <begin position="1"/>
        <end position="519"/>
    </location>
</feature>
<feature type="domain" description="KaiC 1" evidence="1">
    <location>
        <begin position="1"/>
        <end position="248"/>
    </location>
</feature>
<feature type="domain" description="KaiC 2" evidence="1">
    <location>
        <begin position="262"/>
        <end position="519"/>
    </location>
</feature>
<feature type="binding site" evidence="1">
    <location>
        <position position="50"/>
    </location>
    <ligand>
        <name>ATP</name>
        <dbReference type="ChEBI" id="CHEBI:30616"/>
        <label>1</label>
        <note>ligand shared between homodimeric partners</note>
    </ligand>
</feature>
<feature type="binding site" evidence="1">
    <location>
        <position position="51"/>
    </location>
    <ligand>
        <name>ATP</name>
        <dbReference type="ChEBI" id="CHEBI:30616"/>
        <label>1</label>
        <note>ligand shared between homodimeric partners</note>
    </ligand>
</feature>
<feature type="binding site" evidence="1">
    <location>
        <position position="52"/>
    </location>
    <ligand>
        <name>ATP</name>
        <dbReference type="ChEBI" id="CHEBI:30616"/>
        <label>1</label>
        <note>ligand shared between homodimeric partners</note>
    </ligand>
</feature>
<feature type="binding site" evidence="1">
    <location>
        <position position="53"/>
    </location>
    <ligand>
        <name>ATP</name>
        <dbReference type="ChEBI" id="CHEBI:30616"/>
        <label>1</label>
        <note>ligand shared between homodimeric partners</note>
    </ligand>
</feature>
<feature type="binding site" evidence="1">
    <location>
        <position position="54"/>
    </location>
    <ligand>
        <name>ATP</name>
        <dbReference type="ChEBI" id="CHEBI:30616"/>
        <label>1</label>
        <note>ligand shared between homodimeric partners</note>
    </ligand>
</feature>
<feature type="binding site" evidence="1">
    <location>
        <position position="54"/>
    </location>
    <ligand>
        <name>Mg(2+)</name>
        <dbReference type="ChEBI" id="CHEBI:18420"/>
        <label>1</label>
    </ligand>
</feature>
<feature type="binding site" evidence="1">
    <location>
        <position position="55"/>
    </location>
    <ligand>
        <name>ATP</name>
        <dbReference type="ChEBI" id="CHEBI:30616"/>
        <label>1</label>
        <note>ligand shared between homodimeric partners</note>
    </ligand>
</feature>
<feature type="binding site" evidence="1">
    <location>
        <position position="90"/>
    </location>
    <ligand>
        <name>ATP</name>
        <dbReference type="ChEBI" id="CHEBI:30616"/>
        <label>1</label>
        <note>ligand shared between homodimeric partners</note>
    </ligand>
</feature>
<feature type="binding site" evidence="1">
    <location>
        <position position="225"/>
    </location>
    <ligand>
        <name>ATP</name>
        <dbReference type="ChEBI" id="CHEBI:30616"/>
        <label>1</label>
        <note>ligand shared between homodimeric partners</note>
    </ligand>
</feature>
<feature type="binding site" evidence="1">
    <location>
        <position position="226"/>
    </location>
    <ligand>
        <name>ATP</name>
        <dbReference type="ChEBI" id="CHEBI:30616"/>
        <label>1</label>
        <note>ligand shared between homodimeric partners</note>
    </ligand>
</feature>
<feature type="binding site" evidence="1">
    <location>
        <position position="227"/>
    </location>
    <ligand>
        <name>ATP</name>
        <dbReference type="ChEBI" id="CHEBI:30616"/>
        <label>1</label>
        <note>ligand shared between homodimeric partners</note>
    </ligand>
</feature>
<feature type="binding site" evidence="1">
    <location>
        <position position="229"/>
    </location>
    <ligand>
        <name>ATP</name>
        <dbReference type="ChEBI" id="CHEBI:30616"/>
        <label>1</label>
        <note>ligand shared between homodimeric partners</note>
    </ligand>
</feature>
<feature type="binding site" evidence="1">
    <location>
        <position position="231"/>
    </location>
    <ligand>
        <name>ATP</name>
        <dbReference type="ChEBI" id="CHEBI:30616"/>
        <label>1</label>
        <note>ligand shared between homodimeric partners</note>
    </ligand>
</feature>
<feature type="binding site" evidence="1">
    <location>
        <position position="241"/>
    </location>
    <ligand>
        <name>ATP</name>
        <dbReference type="ChEBI" id="CHEBI:30616"/>
        <label>1</label>
        <note>ligand shared between homodimeric partners</note>
    </ligand>
</feature>
<feature type="binding site" evidence="1">
    <location>
        <position position="291"/>
    </location>
    <ligand>
        <name>ATP</name>
        <dbReference type="ChEBI" id="CHEBI:30616"/>
        <label>2</label>
        <note>ligand shared between homodimeric partners</note>
    </ligand>
</feature>
<feature type="binding site" evidence="1">
    <location>
        <position position="292"/>
    </location>
    <ligand>
        <name>ATP</name>
        <dbReference type="ChEBI" id="CHEBI:30616"/>
        <label>2</label>
        <note>ligand shared between homodimeric partners</note>
    </ligand>
</feature>
<feature type="binding site" evidence="1">
    <location>
        <position position="293"/>
    </location>
    <ligand>
        <name>ATP</name>
        <dbReference type="ChEBI" id="CHEBI:30616"/>
        <label>2</label>
        <note>ligand shared between homodimeric partners</note>
    </ligand>
</feature>
<feature type="binding site" evidence="1">
    <location>
        <position position="294"/>
    </location>
    <ligand>
        <name>ATP</name>
        <dbReference type="ChEBI" id="CHEBI:30616"/>
        <label>2</label>
        <note>ligand shared between homodimeric partners</note>
    </ligand>
</feature>
<feature type="binding site" evidence="1">
    <location>
        <position position="295"/>
    </location>
    <ligand>
        <name>ATP</name>
        <dbReference type="ChEBI" id="CHEBI:30616"/>
        <label>2</label>
        <note>ligand shared between homodimeric partners</note>
    </ligand>
</feature>
<feature type="binding site" evidence="1">
    <location>
        <position position="296"/>
    </location>
    <ligand>
        <name>ATP</name>
        <dbReference type="ChEBI" id="CHEBI:30616"/>
        <label>2</label>
        <note>ligand shared between homodimeric partners</note>
    </ligand>
</feature>
<feature type="binding site" evidence="1">
    <location>
        <position position="296"/>
    </location>
    <ligand>
        <name>Mg(2+)</name>
        <dbReference type="ChEBI" id="CHEBI:18420"/>
        <label>2</label>
    </ligand>
</feature>
<feature type="binding site" evidence="1">
    <location>
        <position position="297"/>
    </location>
    <ligand>
        <name>ATP</name>
        <dbReference type="ChEBI" id="CHEBI:30616"/>
        <label>2</label>
        <note>ligand shared between homodimeric partners</note>
    </ligand>
</feature>
<feature type="binding site" evidence="1">
    <location>
        <position position="319"/>
    </location>
    <ligand>
        <name>Mg(2+)</name>
        <dbReference type="ChEBI" id="CHEBI:18420"/>
        <label>2</label>
    </ligand>
</feature>
<feature type="binding site" evidence="1">
    <location>
        <position position="332"/>
    </location>
    <ligand>
        <name>ATP</name>
        <dbReference type="ChEBI" id="CHEBI:30616"/>
        <label>2</label>
        <note>ligand shared between homodimeric partners</note>
    </ligand>
</feature>
<feature type="binding site" evidence="1">
    <location>
        <position position="452"/>
    </location>
    <ligand>
        <name>ATP</name>
        <dbReference type="ChEBI" id="CHEBI:30616"/>
        <label>2</label>
        <note>ligand shared between homodimeric partners</note>
    </ligand>
</feature>
<feature type="binding site" evidence="1">
    <location>
        <position position="458"/>
    </location>
    <ligand>
        <name>ATP</name>
        <dbReference type="ChEBI" id="CHEBI:30616"/>
        <label>2</label>
        <note>ligand shared between homodimeric partners</note>
    </ligand>
</feature>
<feature type="binding site" evidence="1">
    <location>
        <position position="459"/>
    </location>
    <ligand>
        <name>ATP</name>
        <dbReference type="ChEBI" id="CHEBI:30616"/>
        <label>2</label>
        <note>ligand shared between homodimeric partners</note>
    </ligand>
</feature>
<feature type="binding site" evidence="1">
    <location>
        <position position="460"/>
    </location>
    <ligand>
        <name>ATP</name>
        <dbReference type="ChEBI" id="CHEBI:30616"/>
        <label>2</label>
        <note>ligand shared between homodimeric partners</note>
    </ligand>
</feature>
<feature type="binding site" evidence="1">
    <location>
        <position position="462"/>
    </location>
    <ligand>
        <name>ATP</name>
        <dbReference type="ChEBI" id="CHEBI:30616"/>
        <label>2</label>
        <note>ligand shared between homodimeric partners</note>
    </ligand>
</feature>
<feature type="binding site" evidence="1">
    <location>
        <position position="464"/>
    </location>
    <ligand>
        <name>ATP</name>
        <dbReference type="ChEBI" id="CHEBI:30616"/>
        <label>2</label>
        <note>ligand shared between homodimeric partners</note>
    </ligand>
</feature>
<feature type="binding site" evidence="1">
    <location>
        <position position="466"/>
    </location>
    <ligand>
        <name>ATP</name>
        <dbReference type="ChEBI" id="CHEBI:30616"/>
        <label>2</label>
        <note>ligand shared between homodimeric partners</note>
    </ligand>
</feature>
<feature type="modified residue" description="Phosphoserine; by autocatalysis" evidence="1 9">
    <location>
        <position position="432"/>
    </location>
</feature>
<feature type="modified residue" description="Phosphothreonine; by autocatalysis" evidence="1 9">
    <location>
        <position position="433"/>
    </location>
</feature>
<comment type="function">
    <text evidence="2 3">Component of the oscillator and circadian clock in this organism, enhances fitness in a rhythmic environment (PubMed:25139948). Autophosphorylates in the presence of KaiA, no activity is seen in its absence (PubMed:23449916).</text>
</comment>
<comment type="function">
    <text evidence="1">Central component of the KaiABC oscillator complex, which constitutes the main circadian regulator in cyanobacteria. Complex composition changes during the circadian cycle to control KaiC phosphorylation. KaiA stimulates KaiC autophosphorylation, while KaiB sequesters KaiA, leading to KaiC autodephosphorylation. Clock output pathways impact the RpaA transcriptional regulator. KaiC enhances the autophosphorylation activity of SasA, which then transfers its phosphate group to RpaA to activate it. KaiB and KaiC together enhance the phospho-RpaA dephosphatase activity of CikA.</text>
</comment>
<comment type="function">
    <text evidence="1">Has a weak, temperature-independent ATPase activity; ATPase activity defines the circadian period. The phosphorylation state of KaiC modulates its ATPase activity and effects KaiB binding.</text>
</comment>
<comment type="catalytic activity">
    <reaction evidence="1 9 10">
        <text>L-seryl-[protein] + ATP = O-phospho-L-seryl-[protein] + ADP + H(+)</text>
        <dbReference type="Rhea" id="RHEA:17989"/>
        <dbReference type="Rhea" id="RHEA-COMP:9863"/>
        <dbReference type="Rhea" id="RHEA-COMP:11604"/>
        <dbReference type="ChEBI" id="CHEBI:15378"/>
        <dbReference type="ChEBI" id="CHEBI:29999"/>
        <dbReference type="ChEBI" id="CHEBI:30616"/>
        <dbReference type="ChEBI" id="CHEBI:83421"/>
        <dbReference type="ChEBI" id="CHEBI:456216"/>
        <dbReference type="EC" id="2.7.11.1"/>
    </reaction>
</comment>
<comment type="catalytic activity">
    <reaction evidence="1 9 10">
        <text>L-threonyl-[protein] + ATP = O-phospho-L-threonyl-[protein] + ADP + H(+)</text>
        <dbReference type="Rhea" id="RHEA:46608"/>
        <dbReference type="Rhea" id="RHEA-COMP:11060"/>
        <dbReference type="Rhea" id="RHEA-COMP:11605"/>
        <dbReference type="ChEBI" id="CHEBI:15378"/>
        <dbReference type="ChEBI" id="CHEBI:30013"/>
        <dbReference type="ChEBI" id="CHEBI:30616"/>
        <dbReference type="ChEBI" id="CHEBI:61977"/>
        <dbReference type="ChEBI" id="CHEBI:456216"/>
        <dbReference type="EC" id="2.7.11.1"/>
    </reaction>
</comment>
<comment type="catalytic activity">
    <reaction evidence="1">
        <text>ATP + H2O = ADP + phosphate + H(+)</text>
        <dbReference type="Rhea" id="RHEA:13065"/>
        <dbReference type="ChEBI" id="CHEBI:15377"/>
        <dbReference type="ChEBI" id="CHEBI:15378"/>
        <dbReference type="ChEBI" id="CHEBI:30616"/>
        <dbReference type="ChEBI" id="CHEBI:43474"/>
        <dbReference type="ChEBI" id="CHEBI:456216"/>
    </reaction>
</comment>
<comment type="cofactor">
    <cofactor evidence="1">
        <name>Mg(2+)</name>
        <dbReference type="ChEBI" id="CHEBI:18420"/>
    </cofactor>
    <text evidence="1">Binds 2 Mg(2+) ions per subunit, one in each domain. Mg(2+) is required for hexamerization and phosphatase activity.</text>
</comment>
<comment type="activity regulation">
    <text evidence="1">The interaction with KaiA enhances its phosphorylation status, while the interaction with KaiB decreases it.</text>
</comment>
<comment type="subunit">
    <text evidence="2 4 5 6">Homohexamer; hexamerization is dependent on ATP-binding. Core component of the KaiABC complex, at least composed of a KaiC homohexamer, a KaiB dimer and two KaiA dimers. Interacts directly with SasA. Multimerizes, probably forming homohexamers, no interaction with KaiC2 or KaiC3 is seen. Interacts with KaiA (PubMed:23449916). In another study interacts with itself, KaiB1, KaiB3 and KaiC3 (PubMed:31767776). Interacts with SasA (hik8) (PubMed:25403325, PubMed:30216574).</text>
</comment>
<comment type="domain">
    <text evidence="1">In the homohexamer the 2 domains (called CI and CII) self-associate to each form a 'donut' layer; the compactness and local conformation of the domains varies over the cell cycle and impacts function. CII has the autokinase and autophosphatase activities, both CI and CII have (weak) ATPase activity; CI has the clock pacemaker role.</text>
</comment>
<comment type="PTM">
    <text evidence="1">Phosphorylated on serine and threonine residues by autocatalysis. Has a 4 step phosphorylation cycle; the autokinase acts first on Thr-433, then Ser-432. When Ser-432 is modified KaiC switches to an autophosphatase mode, acting first on phospho-Thr-433 then phospho-Ser-432.</text>
</comment>
<comment type="disruption phenotype">
    <text evidence="3">A triple kaiA-kaiB1-kaiC1 deletion grows normally under photoautotrophic conditions in continuous light. In a light/dark regime has strongly restricted viability and impaired growth behavior, and overall decreased pigments (after 5-6 days); phenotype is more extreme when grown on 0.2% glucose.</text>
</comment>
<comment type="similarity">
    <text evidence="1">Belongs to the KaiC family.</text>
</comment>
<proteinExistence type="evidence at protein level"/>
<protein>
    <recommendedName>
        <fullName evidence="1 7">Circadian clock oscillator protein KaiC 1</fullName>
        <ecNumber evidence="1 9">2.7.11.1</ecNumber>
        <ecNumber evidence="1">3.6.4.-</ecNumber>
    </recommendedName>
</protein>